<reference key="1">
    <citation type="journal article" date="2000" name="Cell">
        <title>Hedgehog-regulated processing of Gli3 produces an anterior/posterior repressor gradient in the developing vertebrate limb.</title>
        <authorList>
            <person name="Wang B."/>
            <person name="Fallon J.F."/>
            <person name="Beachy P.A."/>
        </authorList>
    </citation>
    <scope>NUCLEOTIDE SEQUENCE [MRNA]</scope>
    <scope>FUNCTION</scope>
    <scope>PROTEOLYTIC PROCESSING</scope>
    <scope>PHOSPHORYLATION</scope>
    <scope>DEVELOPMENTAL STAGE</scope>
</reference>
<evidence type="ECO:0000250" key="1"/>
<evidence type="ECO:0000255" key="2">
    <source>
        <dbReference type="PROSITE-ProRule" id="PRU00042"/>
    </source>
</evidence>
<evidence type="ECO:0000256" key="3">
    <source>
        <dbReference type="SAM" id="MobiDB-lite"/>
    </source>
</evidence>
<evidence type="ECO:0000269" key="4">
    <source>
    </source>
</evidence>
<evidence type="ECO:0000305" key="5"/>
<sequence>MEAQSHSSTTTEKKKVENSIVKCSNRTDVSEKAVASSTTSNEDESPGQTYHRERRNAITMQPQGGQGLSKISEEPSTSSEERASLIKKEIHGSISHLPEPSVPYRGTLVTMDPRNGYMDPHYHPPHLFQAFHPPVPIDARHHEGRYHYEPSPIPPLHVPSALSSSPTYSDLPFIRISPHRNPAAASESPFSTPHPYINPYMDYIRSLHSSPSLSMISAARGLSPTDAPHAGVSPAEYYHQMALLAGQRSPYADIIPSAATAGAGALHMEYLHAMDSTRFPSPRLSARPSRKRTLSISPLSDHSFDLQTMIRTSPNSLVTILNNSCSSWSASGSYGHLSASAISPALSFTYPPTPVSLQQMHQQIISRQQTLGSAFGHSPPLIHPAPTFPTQRPIPGIPSVLNPVQVSSGPSESTQHNKPTSESAVSSTGDPMHNKRSKIKPDEDLPSPGAGSVQEQPEGMTPVKEEGDKDESKQEPEVVYETNCHWEGCSREFDTQEQLVHHINNDHIHGEKKEFVCRWLDCSREQKPFKAQYMLVVHMRRHTGEKPHKCTFEGCTKAYSRLENLKTHLRSHTGEKPYVCEHEGCNKAFSNASDRAKHQNRTHSNEKPYVCKIPGCTKRYTDPSSLRKHVKTVHGPEAHVTKKQRGDIHPRPPPPRDPGSHSQTRSPGQQTQGATGEQKDLNSTTSRREECLQVKAVKSEKPMTSQPSPGGQSTCSSEQSPISNYSNNGIELTLTGGGSVGDLSVIDETPIMDSTISTATTALGLQARRNMTGTKWMEQVKLERLKQVNGMLPRLNPVPPSKAPTLPPLIGNGTQSNSSCSVGGSMTILPNRNELSSTDITVLNMLNRRDSNTSTISSAYLSSRRSSGISPCFSSRRSSDASQAEGRPQNVSVADSYDPISTDASRRSSEASQCDDLPSLLSLTPAQQYRLKAKYAAATGGPPPTPLPNMERMSLKTRMALLGDCRESGISPLPPVNAPRRCSDGGANGYSRRHLLSHDALGNGTRRASDPVRMVSNNLSVPRVQHFNSLNSFNSPALPPSMEKRNLVLQNCTHSEGGVFRGFSSPCPPSISENVTLEAVTMEAGGSLNDEDLLPDDVVQYLNSQNQGTCDHLLNNVLDSNKMHHSVVLGNNNPSSFDRAPPASSQPAGSEVSKSDLPIQWNEVSSGSSDLSPTKLKCSQRSAVQQARAFGLYNNMMVQQQNLQRGNVYQQNGYQNLMENNGSYSLQQNTVLGSGASSSFGMQPNKPYGESVSRQPMIFGAMDSSCGITVQGQKLRSSNMPVSGNQQNFGHPIASSDQATSMANGMQNRNVMEQEYLQNELVGDGIHYQGVNQSSPMTLGQVSPTSQSSLHQGPQSCPPVSHTIGNQSSGLSVAKSYQPCANYSGNRRQNVLRNNLAQQQGHVSDGNQTYRVNTIKLEMQGQSQQFCSNMQNYSGQLYDQTTGFSHQAMKIGSSFFVSEANCLLQETATANSSELLSPGANQVSSTVDSLDSNSLEGVQIDFDAIIDDGDHVSLISGALSPSIIQNLSRNSSRLTTPRASLTFP</sequence>
<protein>
    <recommendedName>
        <fullName>Transcriptional activator GLI3</fullName>
    </recommendedName>
    <alternativeName>
        <fullName>GLI3 full-length protein</fullName>
        <shortName>GLI3FL</shortName>
    </alternativeName>
    <component>
        <recommendedName>
            <fullName>Transcriptional repressor GLI3R</fullName>
        </recommendedName>
        <alternativeName>
            <fullName>GLI3 C-terminally truncated form</fullName>
        </alternativeName>
    </component>
</protein>
<feature type="chain" id="PRO_0000406140" description="Transcriptional activator GLI3">
    <location>
        <begin position="1"/>
        <end position="1544" status="greater than"/>
    </location>
</feature>
<feature type="chain" id="PRO_0000406141" description="Transcriptional repressor GLI3R">
    <location>
        <begin position="1"/>
        <end status="unknown"/>
    </location>
</feature>
<feature type="zinc finger region" description="C2H2-type 1" evidence="2">
    <location>
        <begin position="482"/>
        <end position="509"/>
    </location>
</feature>
<feature type="zinc finger region" description="C2H2-type 2; degenerate" evidence="2">
    <location>
        <begin position="520"/>
        <end position="542"/>
    </location>
</feature>
<feature type="zinc finger region" description="C2H2-type 3" evidence="2">
    <location>
        <begin position="548"/>
        <end position="572"/>
    </location>
</feature>
<feature type="zinc finger region" description="C2H2-type 4" evidence="2">
    <location>
        <begin position="578"/>
        <end position="603"/>
    </location>
</feature>
<feature type="zinc finger region" description="C2H2-type 5" evidence="2">
    <location>
        <begin position="609"/>
        <end position="634"/>
    </location>
</feature>
<feature type="region of interest" description="Disordered" evidence="3">
    <location>
        <begin position="1"/>
        <end position="83"/>
    </location>
</feature>
<feature type="region of interest" description="Disordered" evidence="3">
    <location>
        <begin position="373"/>
        <end position="477"/>
    </location>
</feature>
<feature type="region of interest" description="Disordered" evidence="3">
    <location>
        <begin position="622"/>
        <end position="728"/>
    </location>
</feature>
<feature type="region of interest" description="Disordered" evidence="3">
    <location>
        <begin position="865"/>
        <end position="919"/>
    </location>
</feature>
<feature type="region of interest" description="Disordered" evidence="3">
    <location>
        <begin position="1126"/>
        <end position="1155"/>
    </location>
</feature>
<feature type="region of interest" description="Disordered" evidence="3">
    <location>
        <begin position="1327"/>
        <end position="1368"/>
    </location>
</feature>
<feature type="compositionally biased region" description="Polar residues" evidence="3">
    <location>
        <begin position="1"/>
        <end position="10"/>
    </location>
</feature>
<feature type="compositionally biased region" description="Polar residues" evidence="3">
    <location>
        <begin position="402"/>
        <end position="429"/>
    </location>
</feature>
<feature type="compositionally biased region" description="Basic and acidic residues" evidence="3">
    <location>
        <begin position="463"/>
        <end position="476"/>
    </location>
</feature>
<feature type="compositionally biased region" description="Basic and acidic residues" evidence="3">
    <location>
        <begin position="634"/>
        <end position="650"/>
    </location>
</feature>
<feature type="compositionally biased region" description="Polar residues" evidence="3">
    <location>
        <begin position="660"/>
        <end position="685"/>
    </location>
</feature>
<feature type="compositionally biased region" description="Basic and acidic residues" evidence="3">
    <location>
        <begin position="686"/>
        <end position="701"/>
    </location>
</feature>
<feature type="compositionally biased region" description="Polar residues" evidence="3">
    <location>
        <begin position="702"/>
        <end position="728"/>
    </location>
</feature>
<feature type="compositionally biased region" description="Low complexity" evidence="3">
    <location>
        <begin position="865"/>
        <end position="882"/>
    </location>
</feature>
<feature type="compositionally biased region" description="Polar residues" evidence="3">
    <location>
        <begin position="1330"/>
        <end position="1355"/>
    </location>
</feature>
<feature type="non-terminal residue">
    <location>
        <position position="1544"/>
    </location>
</feature>
<proteinExistence type="evidence at protein level"/>
<keyword id="KW-0010">Activator</keyword>
<keyword id="KW-0963">Cytoplasm</keyword>
<keyword id="KW-0238">DNA-binding</keyword>
<keyword id="KW-0479">Metal-binding</keyword>
<keyword id="KW-0539">Nucleus</keyword>
<keyword id="KW-0597">Phosphoprotein</keyword>
<keyword id="KW-1185">Reference proteome</keyword>
<keyword id="KW-0677">Repeat</keyword>
<keyword id="KW-0678">Repressor</keyword>
<keyword id="KW-0804">Transcription</keyword>
<keyword id="KW-0805">Transcription regulation</keyword>
<keyword id="KW-0862">Zinc</keyword>
<keyword id="KW-0863">Zinc-finger</keyword>
<comment type="function">
    <text evidence="4">Has a dual function as a transcriptional activator and a repressor of the sonic hedgehog (Shh) pathway, and plays a role in limb development. The full-length GLI3 form (GLI3FL) acts as an activator (GLI3A) while GLI3R, its C-terminally truncated form, acts as a repressor.</text>
</comment>
<comment type="subcellular location">
    <subcellularLocation>
        <location>Nucleus</location>
    </subcellularLocation>
    <subcellularLocation>
        <location evidence="1">Cytoplasm</location>
    </subcellularLocation>
</comment>
<comment type="developmental stage">
    <text evidence="4">Detected in limb buds at embryonic stages 22-23 (at protein level).</text>
</comment>
<comment type="PTM">
    <text evidence="4">Phosphorylation is essential for its proteolytic processing.</text>
</comment>
<comment type="PTM">
    <text evidence="4">The repressor form (GLI3R), a C-terminally truncated form is generated from the full-length GLI3 protein (GLI3FL) through proteolytic processing.</text>
</comment>
<comment type="similarity">
    <text evidence="5">Belongs to the GLI C2H2-type zinc-finger protein family.</text>
</comment>
<name>GLI3_CHICK</name>
<dbReference type="EMBL" id="AF222990">
    <property type="protein sequence ID" value="AAF37273.1"/>
    <property type="molecule type" value="mRNA"/>
</dbReference>
<dbReference type="RefSeq" id="NP_001258832.1">
    <property type="nucleotide sequence ID" value="NM_001271903.1"/>
</dbReference>
<dbReference type="SMR" id="Q9IA31"/>
<dbReference type="FunCoup" id="Q9IA31">
    <property type="interactions" value="331"/>
</dbReference>
<dbReference type="STRING" id="9031.ENSGALP00000048561"/>
<dbReference type="GlyGen" id="Q9IA31">
    <property type="glycosylation" value="1 site"/>
</dbReference>
<dbReference type="PaxDb" id="9031-ENSGALP00000036642"/>
<dbReference type="GeneID" id="420769"/>
<dbReference type="KEGG" id="gga:420769"/>
<dbReference type="CTD" id="2737"/>
<dbReference type="VEuPathDB" id="HostDB:geneid_420769"/>
<dbReference type="eggNOG" id="KOG1721">
    <property type="taxonomic scope" value="Eukaryota"/>
</dbReference>
<dbReference type="InParanoid" id="Q9IA31"/>
<dbReference type="OrthoDB" id="3214149at2759"/>
<dbReference type="PhylomeDB" id="Q9IA31"/>
<dbReference type="Proteomes" id="UP000000539">
    <property type="component" value="Unassembled WGS sequence"/>
</dbReference>
<dbReference type="GO" id="GO:0005737">
    <property type="term" value="C:cytoplasm"/>
    <property type="evidence" value="ECO:0007669"/>
    <property type="project" value="UniProtKB-SubCell"/>
</dbReference>
<dbReference type="GO" id="GO:0005634">
    <property type="term" value="C:nucleus"/>
    <property type="evidence" value="ECO:0000318"/>
    <property type="project" value="GO_Central"/>
</dbReference>
<dbReference type="GO" id="GO:0000981">
    <property type="term" value="F:DNA-binding transcription factor activity, RNA polymerase II-specific"/>
    <property type="evidence" value="ECO:0000318"/>
    <property type="project" value="GO_Central"/>
</dbReference>
<dbReference type="GO" id="GO:0000978">
    <property type="term" value="F:RNA polymerase II cis-regulatory region sequence-specific DNA binding"/>
    <property type="evidence" value="ECO:0000318"/>
    <property type="project" value="GO_Central"/>
</dbReference>
<dbReference type="GO" id="GO:0008270">
    <property type="term" value="F:zinc ion binding"/>
    <property type="evidence" value="ECO:0007669"/>
    <property type="project" value="UniProtKB-KW"/>
</dbReference>
<dbReference type="GO" id="GO:0060173">
    <property type="term" value="P:limb development"/>
    <property type="evidence" value="ECO:0000314"/>
    <property type="project" value="UniProtKB"/>
</dbReference>
<dbReference type="GO" id="GO:0045892">
    <property type="term" value="P:negative regulation of DNA-templated transcription"/>
    <property type="evidence" value="ECO:0000314"/>
    <property type="project" value="UniProtKB"/>
</dbReference>
<dbReference type="GO" id="GO:0006357">
    <property type="term" value="P:regulation of transcription by RNA polymerase II"/>
    <property type="evidence" value="ECO:0000318"/>
    <property type="project" value="GO_Central"/>
</dbReference>
<dbReference type="GO" id="GO:0007224">
    <property type="term" value="P:smoothened signaling pathway"/>
    <property type="evidence" value="ECO:0000318"/>
    <property type="project" value="GO_Central"/>
</dbReference>
<dbReference type="FunFam" id="3.30.160.60:FF:000019">
    <property type="entry name" value="GLI family zinc finger 3"/>
    <property type="match status" value="1"/>
</dbReference>
<dbReference type="FunFam" id="3.30.160.60:FF:000031">
    <property type="entry name" value="GLI family zinc finger 3"/>
    <property type="match status" value="1"/>
</dbReference>
<dbReference type="FunFam" id="3.30.160.60:FF:000036">
    <property type="entry name" value="GLI family zinc finger 3"/>
    <property type="match status" value="1"/>
</dbReference>
<dbReference type="FunFam" id="3.30.160.60:FF:000048">
    <property type="entry name" value="GLI family zinc finger 3"/>
    <property type="match status" value="1"/>
</dbReference>
<dbReference type="FunFam" id="3.30.160.60:FF:000068">
    <property type="entry name" value="GLI family zinc finger 3"/>
    <property type="match status" value="1"/>
</dbReference>
<dbReference type="Gene3D" id="3.30.160.60">
    <property type="entry name" value="Classic Zinc Finger"/>
    <property type="match status" value="5"/>
</dbReference>
<dbReference type="InterPro" id="IPR043359">
    <property type="entry name" value="GLI-like"/>
</dbReference>
<dbReference type="InterPro" id="IPR056436">
    <property type="entry name" value="Znf-C2H2_ZIC1-5/GLI1-3-like"/>
</dbReference>
<dbReference type="InterPro" id="IPR036236">
    <property type="entry name" value="Znf_C2H2_sf"/>
</dbReference>
<dbReference type="InterPro" id="IPR013087">
    <property type="entry name" value="Znf_C2H2_type"/>
</dbReference>
<dbReference type="PANTHER" id="PTHR45718">
    <property type="entry name" value="TRANSCRIPTIONAL ACTIVATOR CUBITUS INTERRUPTUS"/>
    <property type="match status" value="1"/>
</dbReference>
<dbReference type="PANTHER" id="PTHR45718:SF5">
    <property type="entry name" value="TRANSCRIPTIONAL ACTIVATOR GLI3"/>
    <property type="match status" value="1"/>
</dbReference>
<dbReference type="Pfam" id="PF00096">
    <property type="entry name" value="zf-C2H2"/>
    <property type="match status" value="2"/>
</dbReference>
<dbReference type="Pfam" id="PF23561">
    <property type="entry name" value="zf-C2H2_15"/>
    <property type="match status" value="1"/>
</dbReference>
<dbReference type="SMART" id="SM00355">
    <property type="entry name" value="ZnF_C2H2"/>
    <property type="match status" value="5"/>
</dbReference>
<dbReference type="SUPFAM" id="SSF57667">
    <property type="entry name" value="beta-beta-alpha zinc fingers"/>
    <property type="match status" value="3"/>
</dbReference>
<dbReference type="PROSITE" id="PS00028">
    <property type="entry name" value="ZINC_FINGER_C2H2_1"/>
    <property type="match status" value="4"/>
</dbReference>
<dbReference type="PROSITE" id="PS50157">
    <property type="entry name" value="ZINC_FINGER_C2H2_2"/>
    <property type="match status" value="5"/>
</dbReference>
<organism>
    <name type="scientific">Gallus gallus</name>
    <name type="common">Chicken</name>
    <dbReference type="NCBI Taxonomy" id="9031"/>
    <lineage>
        <taxon>Eukaryota</taxon>
        <taxon>Metazoa</taxon>
        <taxon>Chordata</taxon>
        <taxon>Craniata</taxon>
        <taxon>Vertebrata</taxon>
        <taxon>Euteleostomi</taxon>
        <taxon>Archelosauria</taxon>
        <taxon>Archosauria</taxon>
        <taxon>Dinosauria</taxon>
        <taxon>Saurischia</taxon>
        <taxon>Theropoda</taxon>
        <taxon>Coelurosauria</taxon>
        <taxon>Aves</taxon>
        <taxon>Neognathae</taxon>
        <taxon>Galloanserae</taxon>
        <taxon>Galliformes</taxon>
        <taxon>Phasianidae</taxon>
        <taxon>Phasianinae</taxon>
        <taxon>Gallus</taxon>
    </lineage>
</organism>
<accession>Q9IA31</accession>
<gene>
    <name type="primary">GLI3</name>
</gene>